<name>CAS2_THET8</name>
<organism>
    <name type="scientific">Thermus thermophilus (strain ATCC 27634 / DSM 579 / HB8)</name>
    <dbReference type="NCBI Taxonomy" id="300852"/>
    <lineage>
        <taxon>Bacteria</taxon>
        <taxon>Thermotogati</taxon>
        <taxon>Deinococcota</taxon>
        <taxon>Deinococci</taxon>
        <taxon>Thermales</taxon>
        <taxon>Thermaceae</taxon>
        <taxon>Thermus</taxon>
    </lineage>
</organism>
<protein>
    <recommendedName>
        <fullName evidence="1">CRISPR-associated endoribonuclease Cas2</fullName>
        <ecNumber evidence="1">3.1.-.-</ecNumber>
    </recommendedName>
</protein>
<dbReference type="EC" id="3.1.-.-" evidence="1"/>
<dbReference type="EMBL" id="AP008227">
    <property type="protein sequence ID" value="BAD72019.1"/>
    <property type="molecule type" value="Genomic_DNA"/>
</dbReference>
<dbReference type="RefSeq" id="WP_011174371.1">
    <property type="nucleotide sequence ID" value="NC_006462.1"/>
</dbReference>
<dbReference type="RefSeq" id="YP_145462.1">
    <property type="nucleotide sequence ID" value="NC_006462.1"/>
</dbReference>
<dbReference type="SMR" id="Q53VV6"/>
<dbReference type="EnsemblBacteria" id="BAD72019">
    <property type="protein sequence ID" value="BAD72019"/>
    <property type="gene ID" value="BAD72019"/>
</dbReference>
<dbReference type="GeneID" id="3169570"/>
<dbReference type="KEGG" id="ttj:TTHB223"/>
<dbReference type="PATRIC" id="fig|300852.9.peg.2177"/>
<dbReference type="HOGENOM" id="CLU_161124_3_3_0"/>
<dbReference type="Proteomes" id="UP000000532">
    <property type="component" value="Plasmid pTT27"/>
</dbReference>
<dbReference type="GO" id="GO:0046872">
    <property type="term" value="F:metal ion binding"/>
    <property type="evidence" value="ECO:0007669"/>
    <property type="project" value="UniProtKB-UniRule"/>
</dbReference>
<dbReference type="GO" id="GO:0004521">
    <property type="term" value="F:RNA endonuclease activity"/>
    <property type="evidence" value="ECO:0007669"/>
    <property type="project" value="InterPro"/>
</dbReference>
<dbReference type="GO" id="GO:0051607">
    <property type="term" value="P:defense response to virus"/>
    <property type="evidence" value="ECO:0007669"/>
    <property type="project" value="UniProtKB-UniRule"/>
</dbReference>
<dbReference type="GO" id="GO:0043571">
    <property type="term" value="P:maintenance of CRISPR repeat elements"/>
    <property type="evidence" value="ECO:0007669"/>
    <property type="project" value="UniProtKB-UniRule"/>
</dbReference>
<dbReference type="CDD" id="cd09725">
    <property type="entry name" value="Cas2_I_II_III"/>
    <property type="match status" value="1"/>
</dbReference>
<dbReference type="Gene3D" id="3.30.70.240">
    <property type="match status" value="1"/>
</dbReference>
<dbReference type="HAMAP" id="MF_01471">
    <property type="entry name" value="Cas2"/>
    <property type="match status" value="1"/>
</dbReference>
<dbReference type="InterPro" id="IPR021127">
    <property type="entry name" value="CRISPR_associated_Cas2"/>
</dbReference>
<dbReference type="InterPro" id="IPR019199">
    <property type="entry name" value="Virulence_VapD/CRISPR_Cas2"/>
</dbReference>
<dbReference type="NCBIfam" id="TIGR01573">
    <property type="entry name" value="cas2"/>
    <property type="match status" value="1"/>
</dbReference>
<dbReference type="PANTHER" id="PTHR34405">
    <property type="entry name" value="CRISPR-ASSOCIATED ENDORIBONUCLEASE CAS2"/>
    <property type="match status" value="1"/>
</dbReference>
<dbReference type="PANTHER" id="PTHR34405:SF3">
    <property type="entry name" value="CRISPR-ASSOCIATED ENDORIBONUCLEASE CAS2 3"/>
    <property type="match status" value="1"/>
</dbReference>
<dbReference type="Pfam" id="PF09827">
    <property type="entry name" value="CRISPR_Cas2"/>
    <property type="match status" value="1"/>
</dbReference>
<dbReference type="PIRSF" id="PIRSF032582">
    <property type="entry name" value="Cas2"/>
    <property type="match status" value="1"/>
</dbReference>
<dbReference type="SUPFAM" id="SSF143430">
    <property type="entry name" value="TTP0101/SSO1404-like"/>
    <property type="match status" value="1"/>
</dbReference>
<sequence>MRELYLVIAYDTPDDRRRARLAKLLKGFGERRQYSVFEARLTREQWAHLKGKLEALVNKEEDVLAVYFLPPEAVGRTWRIGHEGLKRLEDPDFV</sequence>
<accession>Q53VV6</accession>
<feature type="chain" id="PRO_0000417738" description="CRISPR-associated endoribonuclease Cas2">
    <location>
        <begin position="1"/>
        <end position="94"/>
    </location>
</feature>
<feature type="binding site" evidence="1">
    <location>
        <position position="11"/>
    </location>
    <ligand>
        <name>Mg(2+)</name>
        <dbReference type="ChEBI" id="CHEBI:18420"/>
        <note>catalytic</note>
    </ligand>
</feature>
<evidence type="ECO:0000255" key="1">
    <source>
        <dbReference type="HAMAP-Rule" id="MF_01471"/>
    </source>
</evidence>
<geneLocation type="plasmid">
    <name>pTT27</name>
</geneLocation>
<gene>
    <name evidence="1" type="primary">cas2</name>
    <name type="ordered locus">TTHB223</name>
</gene>
<keyword id="KW-0051">Antiviral defense</keyword>
<keyword id="KW-0255">Endonuclease</keyword>
<keyword id="KW-0378">Hydrolase</keyword>
<keyword id="KW-0460">Magnesium</keyword>
<keyword id="KW-0479">Metal-binding</keyword>
<keyword id="KW-0540">Nuclease</keyword>
<keyword id="KW-0614">Plasmid</keyword>
<keyword id="KW-1185">Reference proteome</keyword>
<reference key="1">
    <citation type="submission" date="2004-11" db="EMBL/GenBank/DDBJ databases">
        <title>Complete genome sequence of Thermus thermophilus HB8.</title>
        <authorList>
            <person name="Masui R."/>
            <person name="Kurokawa K."/>
            <person name="Nakagawa N."/>
            <person name="Tokunaga F."/>
            <person name="Koyama Y."/>
            <person name="Shibata T."/>
            <person name="Oshima T."/>
            <person name="Yokoyama S."/>
            <person name="Yasunaga T."/>
            <person name="Kuramitsu S."/>
        </authorList>
    </citation>
    <scope>NUCLEOTIDE SEQUENCE [LARGE SCALE GENOMIC DNA]</scope>
    <source>
        <strain>ATCC 27634 / DSM 579 / HB8</strain>
    </source>
</reference>
<comment type="function">
    <text evidence="1">CRISPR (clustered regularly interspaced short palindromic repeat), is an adaptive immune system that provides protection against mobile genetic elements (viruses, transposable elements and conjugative plasmids). CRISPR clusters contain sequences complementary to antecedent mobile elements and target invading nucleic acids. CRISPR clusters are transcribed and processed into CRISPR RNA (crRNA). Functions as a ssRNA-specific endoribonuclease. Involved in the integration of spacer DNA into the CRISPR cassette.</text>
</comment>
<comment type="cofactor">
    <cofactor evidence="1">
        <name>Mg(2+)</name>
        <dbReference type="ChEBI" id="CHEBI:18420"/>
    </cofactor>
</comment>
<comment type="subunit">
    <text evidence="1">Homodimer, forms a heterotetramer with a Cas1 homodimer.</text>
</comment>
<comment type="similarity">
    <text evidence="1">Belongs to the CRISPR-associated endoribonuclease Cas2 protein family.</text>
</comment>
<proteinExistence type="inferred from homology"/>